<proteinExistence type="inferred from homology"/>
<reference key="1">
    <citation type="journal article" date="2009" name="Science">
        <title>The dynamics and time scale of ongoing genomic erosion in symbiotic bacteria.</title>
        <authorList>
            <person name="Moran N.A."/>
            <person name="McLaughlin H.J."/>
            <person name="Sorek R."/>
        </authorList>
    </citation>
    <scope>NUCLEOTIDE SEQUENCE [LARGE SCALE GENOMIC DNA]</scope>
    <source>
        <strain>Tuc7</strain>
    </source>
</reference>
<organism>
    <name type="scientific">Buchnera aphidicola subsp. Acyrthosiphon pisum (strain Tuc7)</name>
    <dbReference type="NCBI Taxonomy" id="561501"/>
    <lineage>
        <taxon>Bacteria</taxon>
        <taxon>Pseudomonadati</taxon>
        <taxon>Pseudomonadota</taxon>
        <taxon>Gammaproteobacteria</taxon>
        <taxon>Enterobacterales</taxon>
        <taxon>Erwiniaceae</taxon>
        <taxon>Buchnera</taxon>
    </lineage>
</organism>
<feature type="chain" id="PRO_1000149455" description="Exoribonuclease 2">
    <location>
        <begin position="1"/>
        <end position="649"/>
    </location>
</feature>
<feature type="domain" description="RNB" evidence="1">
    <location>
        <begin position="190"/>
        <end position="517"/>
    </location>
</feature>
<feature type="domain" description="S1 motif" evidence="2">
    <location>
        <begin position="562"/>
        <end position="644"/>
    </location>
</feature>
<dbReference type="EC" id="3.1.13.1" evidence="2"/>
<dbReference type="EMBL" id="CP001158">
    <property type="protein sequence ID" value="ACL30078.1"/>
    <property type="molecule type" value="Genomic_DNA"/>
</dbReference>
<dbReference type="RefSeq" id="WP_009874220.1">
    <property type="nucleotide sequence ID" value="NC_011834.1"/>
</dbReference>
<dbReference type="SMR" id="B8D7G3"/>
<dbReference type="KEGG" id="bau:BUAPTUC7_263"/>
<dbReference type="HOGENOM" id="CLU_002333_7_3_6"/>
<dbReference type="GO" id="GO:0005829">
    <property type="term" value="C:cytosol"/>
    <property type="evidence" value="ECO:0007669"/>
    <property type="project" value="UniProtKB-ARBA"/>
</dbReference>
<dbReference type="GO" id="GO:0008859">
    <property type="term" value="F:exoribonuclease II activity"/>
    <property type="evidence" value="ECO:0007669"/>
    <property type="project" value="UniProtKB-UniRule"/>
</dbReference>
<dbReference type="GO" id="GO:0003723">
    <property type="term" value="F:RNA binding"/>
    <property type="evidence" value="ECO:0007669"/>
    <property type="project" value="UniProtKB-KW"/>
</dbReference>
<dbReference type="GO" id="GO:0006402">
    <property type="term" value="P:mRNA catabolic process"/>
    <property type="evidence" value="ECO:0007669"/>
    <property type="project" value="UniProtKB-UniRule"/>
</dbReference>
<dbReference type="Gene3D" id="2.40.50.640">
    <property type="match status" value="1"/>
</dbReference>
<dbReference type="Gene3D" id="2.40.50.140">
    <property type="entry name" value="Nucleic acid-binding proteins"/>
    <property type="match status" value="2"/>
</dbReference>
<dbReference type="HAMAP" id="MF_01036">
    <property type="entry name" value="RNase_II"/>
    <property type="match status" value="1"/>
</dbReference>
<dbReference type="InterPro" id="IPR011129">
    <property type="entry name" value="CSD"/>
</dbReference>
<dbReference type="InterPro" id="IPR012340">
    <property type="entry name" value="NA-bd_OB-fold"/>
</dbReference>
<dbReference type="InterPro" id="IPR013223">
    <property type="entry name" value="RNase_B_OB_dom"/>
</dbReference>
<dbReference type="InterPro" id="IPR011804">
    <property type="entry name" value="RNase_II"/>
</dbReference>
<dbReference type="InterPro" id="IPR001900">
    <property type="entry name" value="RNase_II/R"/>
</dbReference>
<dbReference type="InterPro" id="IPR022966">
    <property type="entry name" value="RNase_II/R_CS"/>
</dbReference>
<dbReference type="InterPro" id="IPR004476">
    <property type="entry name" value="RNase_II/RNase_R"/>
</dbReference>
<dbReference type="InterPro" id="IPR050180">
    <property type="entry name" value="RNR_Ribonuclease"/>
</dbReference>
<dbReference type="NCBIfam" id="TIGR00358">
    <property type="entry name" value="3_prime_RNase"/>
    <property type="match status" value="1"/>
</dbReference>
<dbReference type="NCBIfam" id="NF003455">
    <property type="entry name" value="PRK05054.1"/>
    <property type="match status" value="1"/>
</dbReference>
<dbReference type="NCBIfam" id="TIGR02062">
    <property type="entry name" value="RNase_B"/>
    <property type="match status" value="1"/>
</dbReference>
<dbReference type="PANTHER" id="PTHR23355:SF37">
    <property type="entry name" value="EXORIBONUCLEASE 2"/>
    <property type="match status" value="1"/>
</dbReference>
<dbReference type="PANTHER" id="PTHR23355">
    <property type="entry name" value="RIBONUCLEASE"/>
    <property type="match status" value="1"/>
</dbReference>
<dbReference type="Pfam" id="PF08206">
    <property type="entry name" value="OB_RNB"/>
    <property type="match status" value="1"/>
</dbReference>
<dbReference type="Pfam" id="PF00773">
    <property type="entry name" value="RNB"/>
    <property type="match status" value="1"/>
</dbReference>
<dbReference type="SMART" id="SM00357">
    <property type="entry name" value="CSP"/>
    <property type="match status" value="1"/>
</dbReference>
<dbReference type="SMART" id="SM00955">
    <property type="entry name" value="RNB"/>
    <property type="match status" value="1"/>
</dbReference>
<dbReference type="SUPFAM" id="SSF50249">
    <property type="entry name" value="Nucleic acid-binding proteins"/>
    <property type="match status" value="4"/>
</dbReference>
<dbReference type="PROSITE" id="PS01175">
    <property type="entry name" value="RIBONUCLEASE_II"/>
    <property type="match status" value="1"/>
</dbReference>
<evidence type="ECO:0000255" key="1"/>
<evidence type="ECO:0000255" key="2">
    <source>
        <dbReference type="HAMAP-Rule" id="MF_01036"/>
    </source>
</evidence>
<sequence length="649" mass="75132">MFQNNPLLTQLKKNLHAKSPRVEGIVKSTERGFGFLEVDPQKSYFIPPKNMKNVMHGDKIIALLTTEKDREIVEPEKLIEPFLNRFVGKIEKKDNRLFIVPDYPFLKDLITCQPNKNCINIFQNGDWAVAQLKKHKLKGDHLFYAELTEKITQEDDPLIPWWVTLARHDLDRKEPLAEEDDLILKESDNRKDLTDLDFITIDNTNTKDIDDALFVSEKNNGDISLIVAIADPTAYIKHGSKLDVIASKRIFTNYLPGFNIPMLPRNLSEDICSLNPNKRRPVLACHITVLKNGNISNKIEFFLAWIKSKSKLSYDHVSDWIEKIGSWIPPTKSIANQILILHRLCLLRIKWRKKNAVLFKDSIEYRFHVSEHGKIIDVLIEKRRIAHKIIEESMIVANISAANFLSKNIGFGIYNVHSGFDLVNAENAVSFLRSYNLNFTVKEITTLKGFCNLRRVLNIISNNYIDSRIRRFQSFGDFSTIPGPHFALGFSEYATWTSPIRKYSDMINHRLLKSIIKKEKSIKPGEDIKIKISEQRRRNRMAERDVSDWLYTIFLQKKKYQNQKFNAEITDISRSGIRARLIENGANVFIPGTLIHPIREELNFNQESGKVFINGIMHYKISDLIQVTLSDIRLKTRSIIAKPVFEKFK</sequence>
<comment type="function">
    <text evidence="2">Involved in mRNA degradation. Hydrolyzes single-stranded polyribonucleotides processively in the 3' to 5' direction.</text>
</comment>
<comment type="catalytic activity">
    <reaction evidence="2">
        <text>Exonucleolytic cleavage in the 3'- to 5'-direction to yield nucleoside 5'-phosphates.</text>
        <dbReference type="EC" id="3.1.13.1"/>
    </reaction>
</comment>
<comment type="subcellular location">
    <subcellularLocation>
        <location evidence="2">Cytoplasm</location>
    </subcellularLocation>
</comment>
<comment type="similarity">
    <text evidence="2">Belongs to the RNR ribonuclease family. RNase II subfamily.</text>
</comment>
<gene>
    <name evidence="2" type="primary">rnb</name>
    <name type="ordered locus">BUAPTUC7_263</name>
</gene>
<name>RNB_BUCAT</name>
<accession>B8D7G3</accession>
<keyword id="KW-0963">Cytoplasm</keyword>
<keyword id="KW-0269">Exonuclease</keyword>
<keyword id="KW-0378">Hydrolase</keyword>
<keyword id="KW-0540">Nuclease</keyword>
<keyword id="KW-0694">RNA-binding</keyword>
<protein>
    <recommendedName>
        <fullName evidence="2">Exoribonuclease 2</fullName>
        <ecNumber evidence="2">3.1.13.1</ecNumber>
    </recommendedName>
    <alternativeName>
        <fullName evidence="2">Exoribonuclease II</fullName>
        <shortName evidence="2">RNase II</shortName>
        <shortName evidence="2">Ribonuclease II</shortName>
    </alternativeName>
</protein>